<protein>
    <recommendedName>
        <fullName evidence="1">UPF0297 protein ABC1593</fullName>
    </recommendedName>
</protein>
<accession>Q5WHM7</accession>
<gene>
    <name type="ordered locus">ABC1593</name>
</gene>
<feature type="chain" id="PRO_0000216960" description="UPF0297 protein ABC1593">
    <location>
        <begin position="1"/>
        <end position="90"/>
    </location>
</feature>
<proteinExistence type="inferred from homology"/>
<dbReference type="EMBL" id="AP006627">
    <property type="protein sequence ID" value="BAD64128.1"/>
    <property type="molecule type" value="Genomic_DNA"/>
</dbReference>
<dbReference type="RefSeq" id="WP_011246437.1">
    <property type="nucleotide sequence ID" value="NC_006582.1"/>
</dbReference>
<dbReference type="SMR" id="Q5WHM7"/>
<dbReference type="STRING" id="66692.ABC1593"/>
<dbReference type="KEGG" id="bcl:ABC1593"/>
<dbReference type="eggNOG" id="COG4472">
    <property type="taxonomic scope" value="Bacteria"/>
</dbReference>
<dbReference type="HOGENOM" id="CLU_162466_0_0_9"/>
<dbReference type="OrthoDB" id="9796303at2"/>
<dbReference type="Proteomes" id="UP000001168">
    <property type="component" value="Chromosome"/>
</dbReference>
<dbReference type="HAMAP" id="MF_01507">
    <property type="entry name" value="UPF0297"/>
    <property type="match status" value="1"/>
</dbReference>
<dbReference type="InterPro" id="IPR009309">
    <property type="entry name" value="IreB"/>
</dbReference>
<dbReference type="NCBIfam" id="NF003997">
    <property type="entry name" value="PRK05473.1"/>
    <property type="match status" value="1"/>
</dbReference>
<dbReference type="PANTHER" id="PTHR40067">
    <property type="entry name" value="UPF0297 PROTEIN YRZL"/>
    <property type="match status" value="1"/>
</dbReference>
<dbReference type="PANTHER" id="PTHR40067:SF1">
    <property type="entry name" value="UPF0297 PROTEIN YRZL"/>
    <property type="match status" value="1"/>
</dbReference>
<dbReference type="Pfam" id="PF06135">
    <property type="entry name" value="IreB"/>
    <property type="match status" value="1"/>
</dbReference>
<dbReference type="PIRSF" id="PIRSF037258">
    <property type="entry name" value="DUF965_bac"/>
    <property type="match status" value="1"/>
</dbReference>
<name>Y1593_SHOC1</name>
<organism>
    <name type="scientific">Shouchella clausii (strain KSM-K16)</name>
    <name type="common">Alkalihalobacillus clausii</name>
    <dbReference type="NCBI Taxonomy" id="66692"/>
    <lineage>
        <taxon>Bacteria</taxon>
        <taxon>Bacillati</taxon>
        <taxon>Bacillota</taxon>
        <taxon>Bacilli</taxon>
        <taxon>Bacillales</taxon>
        <taxon>Bacillaceae</taxon>
        <taxon>Shouchella</taxon>
    </lineage>
</organism>
<comment type="similarity">
    <text evidence="1">Belongs to the UPF0297 family.</text>
</comment>
<keyword id="KW-1185">Reference proteome</keyword>
<sequence>MSSMDNTMQFNFNDDSFDADVQEVLLSVYDALEEKGYNPINQIVGYLLSGDPAYIPRHKDARTLIRKLERDELIETLVKSYLRSHGKENK</sequence>
<reference key="1">
    <citation type="submission" date="2003-10" db="EMBL/GenBank/DDBJ databases">
        <title>The complete genome sequence of the alkaliphilic Bacillus clausii KSM-K16.</title>
        <authorList>
            <person name="Takaki Y."/>
            <person name="Kageyama Y."/>
            <person name="Shimamura S."/>
            <person name="Suzuki H."/>
            <person name="Nishi S."/>
            <person name="Hatada Y."/>
            <person name="Kawai S."/>
            <person name="Ito S."/>
            <person name="Horikoshi K."/>
        </authorList>
    </citation>
    <scope>NUCLEOTIDE SEQUENCE [LARGE SCALE GENOMIC DNA]</scope>
    <source>
        <strain>KSM-K16</strain>
    </source>
</reference>
<evidence type="ECO:0000255" key="1">
    <source>
        <dbReference type="HAMAP-Rule" id="MF_01507"/>
    </source>
</evidence>